<keyword id="KW-0903">Direct protein sequencing</keyword>
<keyword id="KW-0325">Glycoprotein</keyword>
<keyword id="KW-0326">Glycosidase</keyword>
<keyword id="KW-0378">Hydrolase</keyword>
<reference key="1">
    <citation type="journal article" date="2006" name="Phytochemistry">
        <title>Furostanol glycoside 26-O-beta-glucosidase from the leaves of Solanum torvum.</title>
        <authorList>
            <person name="Arthan D."/>
            <person name="Kittakoop P."/>
            <person name="Esen A."/>
            <person name="Svasti J."/>
        </authorList>
    </citation>
    <scope>PROTEIN SEQUENCE</scope>
    <scope>FUNCTION</scope>
    <scope>CATALYTIC ACTIVITY</scope>
    <scope>BIOPHYSICOCHEMICAL PROPERTIES</scope>
    <scope>ACTIVITY REGULATION</scope>
    <scope>SUBUNIT</scope>
    <scope>GLYCOSYLATION</scope>
    <scope>TISSUE SPECIFICITY</scope>
    <source>
        <tissue>Leaf</tissue>
    </source>
</reference>
<feature type="chain" id="PRO_0000430786" description="Furostanol glycoside 26-O-beta-glucosidase">
    <location>
        <begin position="1" status="less than"/>
        <end position="61" status="greater than"/>
    </location>
</feature>
<feature type="active site" description="Proton donor/acceptor" evidence="1">
    <location>
        <position position="33"/>
    </location>
</feature>
<feature type="binding site" evidence="1">
    <location>
        <position position="33"/>
    </location>
    <ligand>
        <name>D-glucose</name>
        <dbReference type="ChEBI" id="CHEBI:4167"/>
    </ligand>
</feature>
<feature type="unsure residue" description="L or I" evidence="2">
    <location>
        <position position="3"/>
    </location>
</feature>
<feature type="unsure residue" description="I or L" evidence="2">
    <location>
        <position position="13"/>
    </location>
</feature>
<feature type="unsure residue" description="I or L" evidence="2">
    <location>
        <position position="18"/>
    </location>
</feature>
<feature type="unsure residue" description="L or I" evidence="2">
    <location>
        <position position="24"/>
    </location>
</feature>
<feature type="unsure residue" description="I or L" evidence="2">
    <location>
        <position position="31"/>
    </location>
</feature>
<feature type="unsure residue" description="I or L" evidence="2">
    <location>
        <position position="37"/>
    </location>
</feature>
<feature type="unsure residue" description="L or I" evidence="2">
    <location>
        <position position="42"/>
    </location>
</feature>
<feature type="unsure residue" description="I or L" evidence="2">
    <location>
        <position position="43"/>
    </location>
</feature>
<feature type="unsure residue" description="I or L" evidence="2">
    <location>
        <position position="48"/>
    </location>
</feature>
<feature type="unsure residue" description="L or I" evidence="2">
    <location>
        <position position="57"/>
    </location>
</feature>
<feature type="unsure residue" description="L or I" evidence="2">
    <location>
        <position position="59"/>
    </location>
</feature>
<feature type="unsure residue" description="L or I" evidence="2">
    <location>
        <position position="60"/>
    </location>
</feature>
<feature type="non-consecutive residues" evidence="2">
    <location>
        <begin position="6"/>
        <end position="7"/>
    </location>
</feature>
<feature type="non-consecutive residues" evidence="2">
    <location>
        <begin position="16"/>
        <end position="17"/>
    </location>
</feature>
<feature type="non-consecutive residues" evidence="2">
    <location>
        <begin position="27"/>
        <end position="28"/>
    </location>
</feature>
<feature type="non-consecutive residues" evidence="2">
    <location>
        <begin position="39"/>
        <end position="40"/>
    </location>
</feature>
<feature type="non-consecutive residues" evidence="2">
    <location>
        <begin position="47"/>
        <end position="48"/>
    </location>
</feature>
<feature type="non-consecutive residues" evidence="2">
    <location>
        <begin position="54"/>
        <end position="55"/>
    </location>
</feature>
<feature type="non-terminal residue" evidence="2">
    <location>
        <position position="1"/>
    </location>
</feature>
<feature type="non-terminal residue" evidence="2">
    <location>
        <position position="61"/>
    </location>
</feature>
<organism>
    <name type="scientific">Solanum torvum</name>
    <name type="common">Turkey berry</name>
    <name type="synonym">Solanum ficifolium</name>
    <dbReference type="NCBI Taxonomy" id="119830"/>
    <lineage>
        <taxon>Eukaryota</taxon>
        <taxon>Viridiplantae</taxon>
        <taxon>Streptophyta</taxon>
        <taxon>Embryophyta</taxon>
        <taxon>Tracheophyta</taxon>
        <taxon>Spermatophyta</taxon>
        <taxon>Magnoliopsida</taxon>
        <taxon>eudicotyledons</taxon>
        <taxon>Gunneridae</taxon>
        <taxon>Pentapetalae</taxon>
        <taxon>asterids</taxon>
        <taxon>lamiids</taxon>
        <taxon>Solanales</taxon>
        <taxon>Solanaceae</taxon>
        <taxon>Solanoideae</taxon>
        <taxon>Solaneae</taxon>
        <taxon>Solanum</taxon>
    </lineage>
</organism>
<name>F26G_SOLTO</name>
<accession>P0DKH4</accession>
<evidence type="ECO:0000250" key="1">
    <source>
        <dbReference type="UniProtKB" id="Q9XEI3"/>
    </source>
</evidence>
<evidence type="ECO:0000269" key="2">
    <source>
    </source>
</evidence>
<evidence type="ECO:0000303" key="3">
    <source>
    </source>
</evidence>
<evidence type="ECO:0000305" key="4"/>
<protein>
    <recommendedName>
        <fullName evidence="3">Furostanol glycoside 26-O-beta-glucosidase</fullName>
        <ecNumber evidence="2">3.2.1.186</ecNumber>
    </recommendedName>
    <alternativeName>
        <fullName evidence="3">Torvosidase</fullName>
    </alternativeName>
</protein>
<dbReference type="EC" id="3.2.1.186" evidence="2"/>
<dbReference type="SMR" id="P0DKH4"/>
<dbReference type="BRENDA" id="3.2.1.186">
    <property type="organism ID" value="13332"/>
</dbReference>
<dbReference type="GO" id="GO:0016798">
    <property type="term" value="F:hydrolase activity, acting on glycosyl bonds"/>
    <property type="evidence" value="ECO:0007669"/>
    <property type="project" value="UniProtKB-KW"/>
</dbReference>
<comment type="function">
    <text evidence="2">Beta-glucosidase highly specific for the cleavage of C-26-bound glucose moiety of furostanol glycosides torvosides A and H. Hydrolyzes only p-nitrophenyl-beta-glucoside, but not p-nitrophenyl-beta-D-fucoside, p-nitrophenyl-beta-L-fucoside, p-nitrophenyl-beta-D-xyloside, p-nitrophenyl-beta-D-galactoside, p-nitrophenyl-beta-D-NAc-glucosamine, p-nitrophenyl-beta-D-mannoside or any of the p-nitrophenyl-alpha-glycosides tested.</text>
</comment>
<comment type="catalytic activity">
    <reaction evidence="2">
        <text>protodioscin + H2O = 26-deglucoprotodioscin + D-glucose</text>
        <dbReference type="Rhea" id="RHEA:37895"/>
        <dbReference type="ChEBI" id="CHEBI:4167"/>
        <dbReference type="ChEBI" id="CHEBI:8588"/>
        <dbReference type="ChEBI" id="CHEBI:15377"/>
        <dbReference type="ChEBI" id="CHEBI:74026"/>
        <dbReference type="EC" id="3.2.1.186"/>
    </reaction>
</comment>
<comment type="activity regulation">
    <text evidence="2">Inhibited by Hg(2+) and D-glucono-1,5-lactone.</text>
</comment>
<comment type="biophysicochemical properties">
    <kinetics>
        <KM evidence="2">0.063 mM for torvoside A</KM>
        <KM evidence="2">0.068 mM for torvoside H</KM>
        <KM evidence="2">1.03 mM for p-nitrophenyl-beta-glucoside</KM>
        <KM evidence="2">0.78 mM for 4-methylumbelliferyl-beta-glucoside</KM>
        <text evidence="2">kcat is 8.6 sec(-1) for torvoside A. kcat is 7.7 sec(-1) for torvoside B. kcat is 9.1 sec(-1) for p-nitrophenyl-beta-glucoside. kcat is 8.3 sec(-1) for 4-methylumbelliferyl-beta-glucoside.</text>
    </kinetics>
    <phDependence>
        <text evidence="2">Optimum pH is 5.0.</text>
    </phDependence>
</comment>
<comment type="subunit">
    <text evidence="2">Monomer.</text>
</comment>
<comment type="tissue specificity">
    <text evidence="2 3">Expressed in petioles and leaves, but not in fruits.</text>
</comment>
<comment type="PTM">
    <text evidence="2">Glycosylated.</text>
</comment>
<comment type="similarity">
    <text evidence="4">Belongs to the glycosyl hydrolase 3 family.</text>
</comment>
<proteinExistence type="evidence at protein level"/>
<sequence>MTLEEKIGQMSQIDARRIGAATALEVRGFLISDSQGIDRHNLIPMSRIDDAVSRKSLVLLK</sequence>